<name>PSBL_PINTH</name>
<reference key="1">
    <citation type="journal article" date="1994" name="Proc. Natl. Acad. Sci. U.S.A.">
        <title>Loss of all ndh genes as determined by sequencing the entire chloroplast genome of the black pine Pinus thunbergii.</title>
        <authorList>
            <person name="Wakasugi T."/>
            <person name="Tsudzuki J."/>
            <person name="Ito S."/>
            <person name="Nakashima K."/>
            <person name="Tsudzuki T."/>
            <person name="Sugiura M."/>
        </authorList>
    </citation>
    <scope>NUCLEOTIDE SEQUENCE [LARGE SCALE GENOMIC DNA]</scope>
</reference>
<organism>
    <name type="scientific">Pinus thunbergii</name>
    <name type="common">Japanese black pine</name>
    <name type="synonym">Pinus thunbergiana</name>
    <dbReference type="NCBI Taxonomy" id="3350"/>
    <lineage>
        <taxon>Eukaryota</taxon>
        <taxon>Viridiplantae</taxon>
        <taxon>Streptophyta</taxon>
        <taxon>Embryophyta</taxon>
        <taxon>Tracheophyta</taxon>
        <taxon>Spermatophyta</taxon>
        <taxon>Pinopsida</taxon>
        <taxon>Pinidae</taxon>
        <taxon>Conifers I</taxon>
        <taxon>Pinales</taxon>
        <taxon>Pinaceae</taxon>
        <taxon>Pinus</taxon>
        <taxon>Pinus subgen. Pinus</taxon>
    </lineage>
</organism>
<protein>
    <recommendedName>
        <fullName evidence="1">Photosystem II reaction center protein L</fullName>
        <shortName evidence="1">PSII-L</shortName>
    </recommendedName>
</protein>
<accession>P41617</accession>
<keyword id="KW-0150">Chloroplast</keyword>
<keyword id="KW-0472">Membrane</keyword>
<keyword id="KW-0602">Photosynthesis</keyword>
<keyword id="KW-0604">Photosystem II</keyword>
<keyword id="KW-0934">Plastid</keyword>
<keyword id="KW-0674">Reaction center</keyword>
<keyword id="KW-0793">Thylakoid</keyword>
<keyword id="KW-0812">Transmembrane</keyword>
<keyword id="KW-1133">Transmembrane helix</keyword>
<evidence type="ECO:0000255" key="1">
    <source>
        <dbReference type="HAMAP-Rule" id="MF_01317"/>
    </source>
</evidence>
<gene>
    <name evidence="1" type="primary">psbL</name>
</gene>
<comment type="function">
    <text evidence="1">One of the components of the core complex of photosystem II (PSII). PSII is a light-driven water:plastoquinone oxidoreductase that uses light energy to abstract electrons from H(2)O, generating O(2) and a proton gradient subsequently used for ATP formation. It consists of a core antenna complex that captures photons, and an electron transfer chain that converts photonic excitation into a charge separation. This subunit is found at the monomer-monomer interface and is required for correct PSII assembly and/or dimerization.</text>
</comment>
<comment type="subunit">
    <text evidence="1">PSII is composed of 1 copy each of membrane proteins PsbA, PsbB, PsbC, PsbD, PsbE, PsbF, PsbH, PsbI, PsbJ, PsbK, PsbL, PsbM, PsbT, PsbX, PsbY, PsbZ, Psb30/Ycf12, at least 3 peripheral proteins of the oxygen-evolving complex and a large number of cofactors. It forms dimeric complexes.</text>
</comment>
<comment type="subcellular location">
    <subcellularLocation>
        <location evidence="1">Plastid</location>
        <location evidence="1">Chloroplast thylakoid membrane</location>
        <topology evidence="1">Single-pass membrane protein</topology>
    </subcellularLocation>
</comment>
<comment type="similarity">
    <text evidence="1">Belongs to the PsbL family.</text>
</comment>
<proteinExistence type="inferred from homology"/>
<sequence>MTRPNPNDQNVELNRTSLYWGLLLIFVLAVPFSNYFFN</sequence>
<feature type="chain" id="PRO_0000219760" description="Photosystem II reaction center protein L">
    <location>
        <begin position="1"/>
        <end position="38"/>
    </location>
</feature>
<feature type="transmembrane region" description="Helical" evidence="1">
    <location>
        <begin position="17"/>
        <end position="37"/>
    </location>
</feature>
<geneLocation type="chloroplast"/>
<dbReference type="EMBL" id="D17510">
    <property type="protein sequence ID" value="BAA04355.1"/>
    <property type="molecule type" value="Genomic_DNA"/>
</dbReference>
<dbReference type="PIR" id="T07477">
    <property type="entry name" value="T07477"/>
</dbReference>
<dbReference type="RefSeq" id="NP_042398.1">
    <property type="nucleotide sequence ID" value="NC_001631.1"/>
</dbReference>
<dbReference type="SMR" id="P41617"/>
<dbReference type="GeneID" id="809027"/>
<dbReference type="GO" id="GO:0009535">
    <property type="term" value="C:chloroplast thylakoid membrane"/>
    <property type="evidence" value="ECO:0007669"/>
    <property type="project" value="UniProtKB-SubCell"/>
</dbReference>
<dbReference type="GO" id="GO:0009539">
    <property type="term" value="C:photosystem II reaction center"/>
    <property type="evidence" value="ECO:0007669"/>
    <property type="project" value="InterPro"/>
</dbReference>
<dbReference type="GO" id="GO:0015979">
    <property type="term" value="P:photosynthesis"/>
    <property type="evidence" value="ECO:0007669"/>
    <property type="project" value="UniProtKB-UniRule"/>
</dbReference>
<dbReference type="HAMAP" id="MF_01317">
    <property type="entry name" value="PSII_PsbL"/>
    <property type="match status" value="1"/>
</dbReference>
<dbReference type="InterPro" id="IPR003372">
    <property type="entry name" value="PSII_PsbL"/>
</dbReference>
<dbReference type="InterPro" id="IPR037266">
    <property type="entry name" value="PSII_PsbL_sf"/>
</dbReference>
<dbReference type="Pfam" id="PF02419">
    <property type="entry name" value="PsbL"/>
    <property type="match status" value="1"/>
</dbReference>
<dbReference type="SUPFAM" id="SSF161017">
    <property type="entry name" value="Photosystem II reaction center protein L, PsbL"/>
    <property type="match status" value="1"/>
</dbReference>